<gene>
    <name type="primary">rps4</name>
</gene>
<accession>Q4G3A4</accession>
<proteinExistence type="inferred from homology"/>
<reference key="1">
    <citation type="journal article" date="2005" name="DNA Res.">
        <title>The complete plastid genome sequence of the haptophyte Emiliania huxleyi: a comparison to other plastid genomes.</title>
        <authorList>
            <person name="Sanchez-Puerta M.V."/>
            <person name="Bachvaroff T.R."/>
            <person name="Delwiche C.F."/>
        </authorList>
    </citation>
    <scope>NUCLEOTIDE SEQUENCE [LARGE SCALE GENOMIC DNA]</scope>
    <source>
        <strain>CCMP373 / CSIRO-CS-57 / BT6</strain>
    </source>
</reference>
<keyword id="KW-0150">Chloroplast</keyword>
<keyword id="KW-0934">Plastid</keyword>
<keyword id="KW-0687">Ribonucleoprotein</keyword>
<keyword id="KW-0689">Ribosomal protein</keyword>
<keyword id="KW-0694">RNA-binding</keyword>
<keyword id="KW-0699">rRNA-binding</keyword>
<dbReference type="EMBL" id="AY741371">
    <property type="protein sequence ID" value="AAX13862.1"/>
    <property type="molecule type" value="Genomic_DNA"/>
</dbReference>
<dbReference type="RefSeq" id="YP_277363.1">
    <property type="nucleotide sequence ID" value="NC_007288.1"/>
</dbReference>
<dbReference type="SMR" id="Q4G3A4"/>
<dbReference type="STRING" id="2903.Q4G3A4"/>
<dbReference type="GeneID" id="3562439"/>
<dbReference type="GO" id="GO:0009507">
    <property type="term" value="C:chloroplast"/>
    <property type="evidence" value="ECO:0007669"/>
    <property type="project" value="UniProtKB-SubCell"/>
</dbReference>
<dbReference type="GO" id="GO:0015935">
    <property type="term" value="C:small ribosomal subunit"/>
    <property type="evidence" value="ECO:0007669"/>
    <property type="project" value="InterPro"/>
</dbReference>
<dbReference type="GO" id="GO:0019843">
    <property type="term" value="F:rRNA binding"/>
    <property type="evidence" value="ECO:0007669"/>
    <property type="project" value="UniProtKB-UniRule"/>
</dbReference>
<dbReference type="GO" id="GO:0003735">
    <property type="term" value="F:structural constituent of ribosome"/>
    <property type="evidence" value="ECO:0007669"/>
    <property type="project" value="InterPro"/>
</dbReference>
<dbReference type="GO" id="GO:0042274">
    <property type="term" value="P:ribosomal small subunit biogenesis"/>
    <property type="evidence" value="ECO:0007669"/>
    <property type="project" value="TreeGrafter"/>
</dbReference>
<dbReference type="GO" id="GO:0006412">
    <property type="term" value="P:translation"/>
    <property type="evidence" value="ECO:0007669"/>
    <property type="project" value="UniProtKB-UniRule"/>
</dbReference>
<dbReference type="CDD" id="cd00165">
    <property type="entry name" value="S4"/>
    <property type="match status" value="1"/>
</dbReference>
<dbReference type="FunFam" id="3.10.290.10:FF:000001">
    <property type="entry name" value="30S ribosomal protein S4"/>
    <property type="match status" value="1"/>
</dbReference>
<dbReference type="FunFam" id="1.10.1050.10:FF:000002">
    <property type="entry name" value="30S ribosomal protein S4, chloroplastic"/>
    <property type="match status" value="1"/>
</dbReference>
<dbReference type="Gene3D" id="1.10.1050.10">
    <property type="entry name" value="Ribosomal Protein S4 Delta 41, Chain A, domain 1"/>
    <property type="match status" value="1"/>
</dbReference>
<dbReference type="Gene3D" id="3.10.290.10">
    <property type="entry name" value="RNA-binding S4 domain"/>
    <property type="match status" value="1"/>
</dbReference>
<dbReference type="HAMAP" id="MF_01306_B">
    <property type="entry name" value="Ribosomal_uS4_B"/>
    <property type="match status" value="1"/>
</dbReference>
<dbReference type="InterPro" id="IPR022801">
    <property type="entry name" value="Ribosomal_uS4"/>
</dbReference>
<dbReference type="InterPro" id="IPR005709">
    <property type="entry name" value="Ribosomal_uS4_bac-type"/>
</dbReference>
<dbReference type="InterPro" id="IPR018079">
    <property type="entry name" value="Ribosomal_uS4_CS"/>
</dbReference>
<dbReference type="InterPro" id="IPR001912">
    <property type="entry name" value="Ribosomal_uS4_N"/>
</dbReference>
<dbReference type="InterPro" id="IPR002942">
    <property type="entry name" value="S4_RNA-bd"/>
</dbReference>
<dbReference type="InterPro" id="IPR036986">
    <property type="entry name" value="S4_RNA-bd_sf"/>
</dbReference>
<dbReference type="NCBIfam" id="NF003717">
    <property type="entry name" value="PRK05327.1"/>
    <property type="match status" value="1"/>
</dbReference>
<dbReference type="NCBIfam" id="TIGR01017">
    <property type="entry name" value="rpsD_bact"/>
    <property type="match status" value="1"/>
</dbReference>
<dbReference type="PANTHER" id="PTHR11831">
    <property type="entry name" value="30S 40S RIBOSOMAL PROTEIN"/>
    <property type="match status" value="1"/>
</dbReference>
<dbReference type="PANTHER" id="PTHR11831:SF4">
    <property type="entry name" value="SMALL RIBOSOMAL SUBUNIT PROTEIN US4M"/>
    <property type="match status" value="1"/>
</dbReference>
<dbReference type="Pfam" id="PF00163">
    <property type="entry name" value="Ribosomal_S4"/>
    <property type="match status" value="1"/>
</dbReference>
<dbReference type="Pfam" id="PF01479">
    <property type="entry name" value="S4"/>
    <property type="match status" value="1"/>
</dbReference>
<dbReference type="SMART" id="SM01390">
    <property type="entry name" value="Ribosomal_S4"/>
    <property type="match status" value="1"/>
</dbReference>
<dbReference type="SMART" id="SM00363">
    <property type="entry name" value="S4"/>
    <property type="match status" value="1"/>
</dbReference>
<dbReference type="SUPFAM" id="SSF55174">
    <property type="entry name" value="Alpha-L RNA-binding motif"/>
    <property type="match status" value="1"/>
</dbReference>
<dbReference type="PROSITE" id="PS00632">
    <property type="entry name" value="RIBOSOMAL_S4"/>
    <property type="match status" value="1"/>
</dbReference>
<dbReference type="PROSITE" id="PS50889">
    <property type="entry name" value="S4"/>
    <property type="match status" value="1"/>
</dbReference>
<name>RR4_EMIHU</name>
<feature type="chain" id="PRO_0000228946" description="Small ribosomal subunit protein uS4c">
    <location>
        <begin position="1"/>
        <end position="202"/>
    </location>
</feature>
<feature type="domain" description="S4 RNA-binding">
    <location>
        <begin position="90"/>
        <end position="152"/>
    </location>
</feature>
<protein>
    <recommendedName>
        <fullName evidence="2">Small ribosomal subunit protein uS4c</fullName>
    </recommendedName>
    <alternativeName>
        <fullName>30S ribosomal protein S4, chloroplastic</fullName>
    </alternativeName>
</protein>
<comment type="function">
    <text evidence="1">One of the primary rRNA binding proteins, it binds directly to 16S rRNA where it nucleates assembly of the body of the 30S subunit.</text>
</comment>
<comment type="function">
    <text evidence="1">With S5 and S12 plays an important role in translational accuracy.</text>
</comment>
<comment type="subunit">
    <text evidence="1">Part of the 30S ribosomal subunit. Contacts protein S5. The interaction surface between S4 and S5 is involved in control of translational fidelity (By similarity).</text>
</comment>
<comment type="subcellular location">
    <subcellularLocation>
        <location>Plastid</location>
        <location>Chloroplast</location>
    </subcellularLocation>
</comment>
<comment type="similarity">
    <text evidence="2">Belongs to the universal ribosomal protein uS4 family.</text>
</comment>
<evidence type="ECO:0000250" key="1"/>
<evidence type="ECO:0000305" key="2"/>
<geneLocation type="chloroplast"/>
<organism>
    <name type="scientific">Emiliania huxleyi</name>
    <name type="common">Coccolithophore</name>
    <name type="synonym">Pontosphaera huxleyi</name>
    <dbReference type="NCBI Taxonomy" id="2903"/>
    <lineage>
        <taxon>Eukaryota</taxon>
        <taxon>Haptista</taxon>
        <taxon>Haptophyta</taxon>
        <taxon>Prymnesiophyceae</taxon>
        <taxon>Isochrysidales</taxon>
        <taxon>Noelaerhabdaceae</taxon>
        <taxon>Emiliania</taxon>
    </lineage>
</organism>
<sequence>MARYRGAKLRITRRLGDLPGLTSKIAKRTSRPGQHGAVQKKPTQYGIRLEEKQKLRFNYGISEKQLMNYIRQAKGIKGTTGTILLQLLEMRLDNLIFRLGLAPTIAAARQLVSHKHIQVNNTRVSIPSYQCQPGDVLSVRDNAASKSLVNTYLESPSLSQSPQHLDFDKKNLTAKVLGIVDREWVALKLNELFVIEYYSRKI</sequence>